<comment type="function">
    <text evidence="1 2">Chromatin-binding factor that repress Notch signaling in the absence of Notch intracellular domain by acting as a CBF1 corepressor. Binds to the HEY promoter and might assist, along with NCOR2, RBPJ-mediated repression. Binds RNA in vitro. May be involved in RNA metabolism. In concert with CIC and ATXN1L, involved brain development.</text>
</comment>
<comment type="subunit">
    <text evidence="1 2">Homooligomer. Interacts with CIC. Interacts with ANP32A, PQBP1, UBQLN4, ATXN1L and USP7. Directly interacts with RBPJ; this interaction is disrupted in the presence of Notch intracellular domain. Competes with ATXN1L for RBPJ-binding. Found in a complex with CIC and ATXN1L.</text>
</comment>
<comment type="subcellular location">
    <subcellularLocation>
        <location evidence="1">Cytoplasm</location>
    </subcellularLocation>
    <subcellularLocation>
        <location evidence="1">Nucleus</location>
    </subcellularLocation>
    <text evidence="1">Colocalizes with USP7 in the nucleus.</text>
</comment>
<comment type="domain">
    <text evidence="2">The AXH domain is required for interaction with CIC.</text>
</comment>
<comment type="PTM">
    <text evidence="2">Ubiquitinated by UBE3A, leading to its degradation by the proteasome.</text>
</comment>
<comment type="PTM">
    <text evidence="1">Phosphorylation at Ser-749 increases the pathogenicity of proteins with an expanded polyglutamine tract.</text>
</comment>
<comment type="PTM">
    <text evidence="1">Sumoylation is dependent on nuclear localization and phosphorylation at Ser-749. It is reduced in the presence of an expanded polyglutamine tract.</text>
</comment>
<comment type="polymorphism">
    <text>The rat poly-Gln region is very limited in comparison to human ATXN1 and is not polymorphic.</text>
</comment>
<comment type="similarity">
    <text evidence="5">Belongs to the ATXN1 family.</text>
</comment>
<accession>Q63540</accession>
<sequence>MKSNQERSNECLPPKKREIPATSRPSEEKATALPSDNHCVEGVAWLPSTPGSRGHGGGRHGPAGTSGEHGLQGMGLHKALSAGLDYSPPSAPRSVPTANTLPTVYPPPQSGTPVSPVQYAHLSHTFQFIGSSQYSGPYAGFIPSQLISPPGNPVTSAVASAAGATTPSQRSQLEAYSTLLANMGSLSQAPGHKVEPPPQQHLGRAAGLVNPGSPPPTQQNQYIHISSSPQSSGRATSPPIPVHLHPHQTMIPHTLTLGPSSQVVVQYSDAGGHFVPRESTKKAESSRLQQAMQAKEVLNGEMEKSRRYGASSSVELSLGKTSSKSVPHPYESRHVVVHPSPADYSSRDTSGVRGSVMVLPNSSTPSADLETQQATHREASPSTLNDKSGLHLGKPGHRSYALSPHTVIQTTHSASEPLPVGLPATAFYAGAQPPVIGYLSSQQQAITYAGGLPQHLVIPGTQPLLIPVGSPDMDTPGAASAIVTSSPQFAAVPHTFVTTALPKSENFNPEALVTQAAYPAMVQAQIHLPVVQSVASPAAASPTLPPYFMKGSIIQLANGELKKVEDLKTEDFIQSAEISNDLKIDSSTVERIEDSHSPGVAVIQFAVGEHRAQVSVEVLVEYPFFVFGQGWSSCCPERTSQLFDLPCSKLSVGDVCISLTLKNLKNGSVKKGQPVDPASALLKHAKTDSLAGSRHRYAEQENGINQGSAQVLSENGELKFPEKIGLPAAPFLTKIEPSKPTATRKRRWSAPETRKLEKSEDEPPLTLPKPSLIPQEVKICIEGRSNVGK</sequence>
<proteinExistence type="evidence at transcript level"/>
<gene>
    <name type="primary">Atxn1</name>
    <name type="synonym">Sca1</name>
</gene>
<reference key="1">
    <citation type="journal article" date="1996" name="Hum. Mol. Genet.">
        <title>cDNA cloning and expression of rsca1, the rat counterpart of the human spinocerebellar ataxia type 1 gene.</title>
        <authorList>
            <person name="Gossen M."/>
            <person name="Schmitt I."/>
            <person name="Obst K."/>
            <person name="Wahle P."/>
            <person name="Epplen J.T."/>
            <person name="Riess O."/>
        </authorList>
    </citation>
    <scope>NUCLEOTIDE SEQUENCE [MRNA]</scope>
    <source>
        <tissue>Brain</tissue>
    </source>
</reference>
<feature type="chain" id="PRO_0000064753" description="Ataxin-1">
    <location>
        <begin position="1"/>
        <end position="789"/>
    </location>
</feature>
<feature type="domain" description="AXH" evidence="3">
    <location>
        <begin position="536"/>
        <end position="667"/>
    </location>
</feature>
<feature type="region of interest" description="Disordered" evidence="4">
    <location>
        <begin position="1"/>
        <end position="73"/>
    </location>
</feature>
<feature type="region of interest" description="Disordered" evidence="4">
    <location>
        <begin position="188"/>
        <end position="237"/>
    </location>
</feature>
<feature type="region of interest" description="Disordered" evidence="4">
    <location>
        <begin position="296"/>
        <end position="397"/>
    </location>
</feature>
<feature type="region of interest" description="Self-association" evidence="1">
    <location>
        <begin position="468"/>
        <end position="578"/>
    </location>
</feature>
<feature type="region of interest" description="Interaction with USP7" evidence="1">
    <location>
        <begin position="512"/>
        <end position="789"/>
    </location>
</feature>
<feature type="region of interest" description="RNA-binding" evidence="1">
    <location>
        <begin position="514"/>
        <end position="740"/>
    </location>
</feature>
<feature type="region of interest" description="Disordered" evidence="4">
    <location>
        <begin position="736"/>
        <end position="772"/>
    </location>
</feature>
<feature type="short sequence motif" description="Nuclear localization signal" evidence="2">
    <location>
        <begin position="768"/>
        <end position="771"/>
    </location>
</feature>
<feature type="compositionally biased region" description="Basic and acidic residues" evidence="4">
    <location>
        <begin position="1"/>
        <end position="30"/>
    </location>
</feature>
<feature type="compositionally biased region" description="Polar residues" evidence="4">
    <location>
        <begin position="218"/>
        <end position="235"/>
    </location>
</feature>
<feature type="compositionally biased region" description="Polar residues" evidence="4">
    <location>
        <begin position="310"/>
        <end position="325"/>
    </location>
</feature>
<feature type="compositionally biased region" description="Polar residues" evidence="4">
    <location>
        <begin position="360"/>
        <end position="386"/>
    </location>
</feature>
<feature type="modified residue" description="Phosphoserine" evidence="2">
    <location>
        <position position="81"/>
    </location>
</feature>
<feature type="modified residue" description="Phosphoserine" evidence="1">
    <location>
        <position position="87"/>
    </location>
</feature>
<feature type="modified residue" description="Phosphoserine" evidence="1">
    <location>
        <position position="213"/>
    </location>
</feature>
<feature type="modified residue" description="Phosphothreonine" evidence="2">
    <location>
        <position position="217"/>
    </location>
</feature>
<feature type="modified residue" description="Phosphoserine" evidence="2">
    <location>
        <position position="228"/>
    </location>
</feature>
<feature type="modified residue" description="Phosphoserine" evidence="1">
    <location>
        <position position="749"/>
    </location>
</feature>
<feature type="cross-link" description="Glycyl lysine isopeptide (Lys-Gly) (interchain with G-Cter in SUMO)" evidence="1">
    <location>
        <position position="16"/>
    </location>
</feature>
<feature type="cross-link" description="Glycyl lysine isopeptide (Lys-Gly) (interchain with G-Cter in SUMO)" evidence="1">
    <location>
        <position position="193"/>
    </location>
</feature>
<feature type="cross-link" description="Glycyl lysine isopeptide (Lys-Gly) (interchain with G-Cter in SUMO)" evidence="1">
    <location>
        <position position="583"/>
    </location>
</feature>
<feature type="cross-link" description="Glycyl lysine isopeptide (Lys-Gly) (interchain with G-Cter in SUMO)" evidence="1">
    <location>
        <position position="670"/>
    </location>
</feature>
<feature type="cross-link" description="Glycyl lysine isopeptide (Lys-Gly) (interchain with G-Cter in SUMO)" evidence="1">
    <location>
        <position position="719"/>
    </location>
</feature>
<protein>
    <recommendedName>
        <fullName>Ataxin-1</fullName>
    </recommendedName>
    <alternativeName>
        <fullName>Spinocerebellar ataxia type 1 protein homolog</fullName>
    </alternativeName>
</protein>
<name>ATX1_RAT</name>
<evidence type="ECO:0000250" key="1">
    <source>
        <dbReference type="UniProtKB" id="P54253"/>
    </source>
</evidence>
<evidence type="ECO:0000250" key="2">
    <source>
        <dbReference type="UniProtKB" id="P54254"/>
    </source>
</evidence>
<evidence type="ECO:0000255" key="3">
    <source>
        <dbReference type="PROSITE-ProRule" id="PRU00496"/>
    </source>
</evidence>
<evidence type="ECO:0000256" key="4">
    <source>
        <dbReference type="SAM" id="MobiDB-lite"/>
    </source>
</evidence>
<evidence type="ECO:0000305" key="5"/>
<organism>
    <name type="scientific">Rattus norvegicus</name>
    <name type="common">Rat</name>
    <dbReference type="NCBI Taxonomy" id="10116"/>
    <lineage>
        <taxon>Eukaryota</taxon>
        <taxon>Metazoa</taxon>
        <taxon>Chordata</taxon>
        <taxon>Craniata</taxon>
        <taxon>Vertebrata</taxon>
        <taxon>Euteleostomi</taxon>
        <taxon>Mammalia</taxon>
        <taxon>Eutheria</taxon>
        <taxon>Euarchontoglires</taxon>
        <taxon>Glires</taxon>
        <taxon>Rodentia</taxon>
        <taxon>Myomorpha</taxon>
        <taxon>Muroidea</taxon>
        <taxon>Muridae</taxon>
        <taxon>Murinae</taxon>
        <taxon>Rattus</taxon>
    </lineage>
</organism>
<keyword id="KW-0963">Cytoplasm</keyword>
<keyword id="KW-0238">DNA-binding</keyword>
<keyword id="KW-1017">Isopeptide bond</keyword>
<keyword id="KW-0539">Nucleus</keyword>
<keyword id="KW-0597">Phosphoprotein</keyword>
<keyword id="KW-1185">Reference proteome</keyword>
<keyword id="KW-0678">Repressor</keyword>
<keyword id="KW-0694">RNA-binding</keyword>
<keyword id="KW-0804">Transcription</keyword>
<keyword id="KW-0805">Transcription regulation</keyword>
<keyword id="KW-0832">Ubl conjugation</keyword>
<dbReference type="EMBL" id="X91619">
    <property type="protein sequence ID" value="CAA62822.1"/>
    <property type="molecule type" value="mRNA"/>
</dbReference>
<dbReference type="RefSeq" id="NP_036858.1">
    <property type="nucleotide sequence ID" value="NM_012726.3"/>
</dbReference>
<dbReference type="RefSeq" id="XP_038951279.1">
    <property type="nucleotide sequence ID" value="XM_039095351.2"/>
</dbReference>
<dbReference type="RefSeq" id="XP_038951280.1">
    <property type="nucleotide sequence ID" value="XM_039095352.2"/>
</dbReference>
<dbReference type="RefSeq" id="XP_038951281.1">
    <property type="nucleotide sequence ID" value="XM_039095353.2"/>
</dbReference>
<dbReference type="RefSeq" id="XP_038951282.1">
    <property type="nucleotide sequence ID" value="XM_039095354.2"/>
</dbReference>
<dbReference type="RefSeq" id="XP_038951284.1">
    <property type="nucleotide sequence ID" value="XM_039095356.2"/>
</dbReference>
<dbReference type="RefSeq" id="XP_038951285.1">
    <property type="nucleotide sequence ID" value="XM_039095357.2"/>
</dbReference>
<dbReference type="RefSeq" id="XP_038951289.1">
    <property type="nucleotide sequence ID" value="XM_039095361.2"/>
</dbReference>
<dbReference type="RefSeq" id="XP_038951291.1">
    <property type="nucleotide sequence ID" value="XM_039095363.2"/>
</dbReference>
<dbReference type="RefSeq" id="XP_038951292.1">
    <property type="nucleotide sequence ID" value="XM_039095364.2"/>
</dbReference>
<dbReference type="RefSeq" id="XP_038951293.1">
    <property type="nucleotide sequence ID" value="XM_039095365.2"/>
</dbReference>
<dbReference type="RefSeq" id="XP_038951294.1">
    <property type="nucleotide sequence ID" value="XM_039095366.2"/>
</dbReference>
<dbReference type="RefSeq" id="XP_038951295.1">
    <property type="nucleotide sequence ID" value="XM_039095367.2"/>
</dbReference>
<dbReference type="RefSeq" id="XP_038951296.1">
    <property type="nucleotide sequence ID" value="XM_039095368.2"/>
</dbReference>
<dbReference type="RefSeq" id="XP_063132134.1">
    <property type="nucleotide sequence ID" value="XM_063276064.1"/>
</dbReference>
<dbReference type="RefSeq" id="XP_063132135.1">
    <property type="nucleotide sequence ID" value="XM_063276065.1"/>
</dbReference>
<dbReference type="RefSeq" id="XP_063132136.1">
    <property type="nucleotide sequence ID" value="XM_063276066.1"/>
</dbReference>
<dbReference type="RefSeq" id="XP_063132137.1">
    <property type="nucleotide sequence ID" value="XM_063276067.1"/>
</dbReference>
<dbReference type="RefSeq" id="XP_063132138.1">
    <property type="nucleotide sequence ID" value="XM_063276068.1"/>
</dbReference>
<dbReference type="BMRB" id="Q63540"/>
<dbReference type="SMR" id="Q63540"/>
<dbReference type="FunCoup" id="Q63540">
    <property type="interactions" value="1643"/>
</dbReference>
<dbReference type="STRING" id="10116.ENSRNOP00000023140"/>
<dbReference type="GlyGen" id="Q63540">
    <property type="glycosylation" value="2 sites"/>
</dbReference>
<dbReference type="iPTMnet" id="Q63540"/>
<dbReference type="PhosphoSitePlus" id="Q63540"/>
<dbReference type="PaxDb" id="10116-ENSRNOP00000023140"/>
<dbReference type="ABCD" id="Q63540">
    <property type="antibodies" value="2 sequenced antibodies"/>
</dbReference>
<dbReference type="Ensembl" id="ENSRNOT00000023140.5">
    <property type="protein sequence ID" value="ENSRNOP00000023140.2"/>
    <property type="gene ID" value="ENSRNOG00000016998.5"/>
</dbReference>
<dbReference type="GeneID" id="25049"/>
<dbReference type="KEGG" id="rno:25049"/>
<dbReference type="AGR" id="RGD:3624"/>
<dbReference type="CTD" id="6310"/>
<dbReference type="RGD" id="3624">
    <property type="gene designation" value="Atxn1"/>
</dbReference>
<dbReference type="eggNOG" id="KOG4053">
    <property type="taxonomic scope" value="Eukaryota"/>
</dbReference>
<dbReference type="GeneTree" id="ENSGT00390000005939"/>
<dbReference type="HOGENOM" id="CLU_019983_0_0_1"/>
<dbReference type="InParanoid" id="Q63540"/>
<dbReference type="OMA" id="HHQGGTH"/>
<dbReference type="OrthoDB" id="10000452at2759"/>
<dbReference type="PhylomeDB" id="Q63540"/>
<dbReference type="TreeFam" id="TF350643"/>
<dbReference type="PRO" id="PR:Q63540"/>
<dbReference type="Proteomes" id="UP000002494">
    <property type="component" value="Chromosome 17"/>
</dbReference>
<dbReference type="Bgee" id="ENSRNOG00000016998">
    <property type="expression patterns" value="Expressed in frontal cortex and 18 other cell types or tissues"/>
</dbReference>
<dbReference type="GO" id="GO:0005737">
    <property type="term" value="C:cytoplasm"/>
    <property type="evidence" value="ECO:0000250"/>
    <property type="project" value="UniProtKB"/>
</dbReference>
<dbReference type="GO" id="GO:0042405">
    <property type="term" value="C:nuclear inclusion body"/>
    <property type="evidence" value="ECO:0000250"/>
    <property type="project" value="UniProtKB"/>
</dbReference>
<dbReference type="GO" id="GO:0016363">
    <property type="term" value="C:nuclear matrix"/>
    <property type="evidence" value="ECO:0000250"/>
    <property type="project" value="UniProtKB"/>
</dbReference>
<dbReference type="GO" id="GO:0005654">
    <property type="term" value="C:nucleoplasm"/>
    <property type="evidence" value="ECO:0000250"/>
    <property type="project" value="UniProtKB"/>
</dbReference>
<dbReference type="GO" id="GO:0005634">
    <property type="term" value="C:nucleus"/>
    <property type="evidence" value="ECO:0000250"/>
    <property type="project" value="UniProtKB"/>
</dbReference>
<dbReference type="GO" id="GO:0098794">
    <property type="term" value="C:postsynapse"/>
    <property type="evidence" value="ECO:0007669"/>
    <property type="project" value="GOC"/>
</dbReference>
<dbReference type="GO" id="GO:0032991">
    <property type="term" value="C:protein-containing complex"/>
    <property type="evidence" value="ECO:0000266"/>
    <property type="project" value="RGD"/>
</dbReference>
<dbReference type="GO" id="GO:0003682">
    <property type="term" value="F:chromatin binding"/>
    <property type="evidence" value="ECO:0000266"/>
    <property type="project" value="RGD"/>
</dbReference>
<dbReference type="GO" id="GO:0003677">
    <property type="term" value="F:DNA binding"/>
    <property type="evidence" value="ECO:0007669"/>
    <property type="project" value="UniProtKB-KW"/>
</dbReference>
<dbReference type="GO" id="GO:0042802">
    <property type="term" value="F:identical protein binding"/>
    <property type="evidence" value="ECO:0000266"/>
    <property type="project" value="RGD"/>
</dbReference>
<dbReference type="GO" id="GO:0034046">
    <property type="term" value="F:poly(G) binding"/>
    <property type="evidence" value="ECO:0000250"/>
    <property type="project" value="UniProtKB"/>
</dbReference>
<dbReference type="GO" id="GO:0008266">
    <property type="term" value="F:poly(U) RNA binding"/>
    <property type="evidence" value="ECO:0000250"/>
    <property type="project" value="UniProtKB"/>
</dbReference>
<dbReference type="GO" id="GO:0031208">
    <property type="term" value="F:POZ domain binding"/>
    <property type="evidence" value="ECO:0000266"/>
    <property type="project" value="RGD"/>
</dbReference>
<dbReference type="GO" id="GO:0003723">
    <property type="term" value="F:RNA binding"/>
    <property type="evidence" value="ECO:0000266"/>
    <property type="project" value="RGD"/>
</dbReference>
<dbReference type="GO" id="GO:0008344">
    <property type="term" value="P:adult locomotory behavior"/>
    <property type="evidence" value="ECO:0000266"/>
    <property type="project" value="RGD"/>
</dbReference>
<dbReference type="GO" id="GO:0007420">
    <property type="term" value="P:brain development"/>
    <property type="evidence" value="ECO:0000250"/>
    <property type="project" value="UniProtKB"/>
</dbReference>
<dbReference type="GO" id="GO:0060079">
    <property type="term" value="P:excitatory postsynaptic potential"/>
    <property type="evidence" value="ECO:0000266"/>
    <property type="project" value="RGD"/>
</dbReference>
<dbReference type="GO" id="GO:0048009">
    <property type="term" value="P:insulin-like growth factor receptor signaling pathway"/>
    <property type="evidence" value="ECO:0000266"/>
    <property type="project" value="RGD"/>
</dbReference>
<dbReference type="GO" id="GO:0007612">
    <property type="term" value="P:learning"/>
    <property type="evidence" value="ECO:0000250"/>
    <property type="project" value="UniProtKB"/>
</dbReference>
<dbReference type="GO" id="GO:0048286">
    <property type="term" value="P:lung alveolus development"/>
    <property type="evidence" value="ECO:0000266"/>
    <property type="project" value="RGD"/>
</dbReference>
<dbReference type="GO" id="GO:0007613">
    <property type="term" value="P:memory"/>
    <property type="evidence" value="ECO:0000250"/>
    <property type="project" value="UniProtKB"/>
</dbReference>
<dbReference type="GO" id="GO:0045892">
    <property type="term" value="P:negative regulation of DNA-templated transcription"/>
    <property type="evidence" value="ECO:0000250"/>
    <property type="project" value="UniProtKB"/>
</dbReference>
<dbReference type="GO" id="GO:0043569">
    <property type="term" value="P:negative regulation of insulin-like growth factor receptor signaling pathway"/>
    <property type="evidence" value="ECO:0000266"/>
    <property type="project" value="RGD"/>
</dbReference>
<dbReference type="GO" id="GO:0000122">
    <property type="term" value="P:negative regulation of transcription by RNA polymerase II"/>
    <property type="evidence" value="ECO:0000266"/>
    <property type="project" value="RGD"/>
</dbReference>
<dbReference type="GO" id="GO:0051168">
    <property type="term" value="P:nuclear export"/>
    <property type="evidence" value="ECO:0000250"/>
    <property type="project" value="UniProtKB"/>
</dbReference>
<dbReference type="GO" id="GO:0060252">
    <property type="term" value="P:positive regulation of glial cell proliferation"/>
    <property type="evidence" value="ECO:0000266"/>
    <property type="project" value="RGD"/>
</dbReference>
<dbReference type="GO" id="GO:0045944">
    <property type="term" value="P:positive regulation of transcription by RNA polymerase II"/>
    <property type="evidence" value="ECO:0000266"/>
    <property type="project" value="RGD"/>
</dbReference>
<dbReference type="GO" id="GO:0035176">
    <property type="term" value="P:social behavior"/>
    <property type="evidence" value="ECO:0000250"/>
    <property type="project" value="UniProtKB"/>
</dbReference>
<dbReference type="GO" id="GO:0006366">
    <property type="term" value="P:transcription by RNA polymerase II"/>
    <property type="evidence" value="ECO:0000266"/>
    <property type="project" value="RGD"/>
</dbReference>
<dbReference type="GO" id="GO:0008542">
    <property type="term" value="P:visual learning"/>
    <property type="evidence" value="ECO:0000266"/>
    <property type="project" value="RGD"/>
</dbReference>
<dbReference type="InterPro" id="IPR020997">
    <property type="entry name" value="Ataxin-1_N"/>
</dbReference>
<dbReference type="InterPro" id="IPR043404">
    <property type="entry name" value="ATAXIN1-like"/>
</dbReference>
<dbReference type="InterPro" id="IPR003652">
    <property type="entry name" value="Ataxin_AXH_dom"/>
</dbReference>
<dbReference type="InterPro" id="IPR036096">
    <property type="entry name" value="Ataxin_AXH_dom_sf"/>
</dbReference>
<dbReference type="PANTHER" id="PTHR13392">
    <property type="entry name" value="ATAXIN 1"/>
    <property type="match status" value="1"/>
</dbReference>
<dbReference type="PANTHER" id="PTHR13392:SF5">
    <property type="entry name" value="ATAXIN-1"/>
    <property type="match status" value="1"/>
</dbReference>
<dbReference type="Pfam" id="PF12547">
    <property type="entry name" value="ATXN-1_C"/>
    <property type="match status" value="1"/>
</dbReference>
<dbReference type="Pfam" id="PF08517">
    <property type="entry name" value="AXH"/>
    <property type="match status" value="1"/>
</dbReference>
<dbReference type="SMART" id="SM00536">
    <property type="entry name" value="AXH"/>
    <property type="match status" value="1"/>
</dbReference>
<dbReference type="SUPFAM" id="SSF102031">
    <property type="entry name" value="AXH domain"/>
    <property type="match status" value="1"/>
</dbReference>
<dbReference type="PROSITE" id="PS51148">
    <property type="entry name" value="AXH"/>
    <property type="match status" value="1"/>
</dbReference>